<proteinExistence type="evidence at protein level"/>
<gene>
    <name type="primary">RPL3-1</name>
    <name type="ordered locus">ECU03_1220</name>
</gene>
<gene>
    <name type="primary">RPL3-2</name>
    <name type="ordered locus">ECU09_1000</name>
</gene>
<accession>Q8SQI3</accession>
<evidence type="ECO:0000269" key="1">
    <source>
    </source>
</evidence>
<evidence type="ECO:0000305" key="2"/>
<organism>
    <name type="scientific">Encephalitozoon cuniculi (strain GB-M1)</name>
    <name type="common">Microsporidian parasite</name>
    <dbReference type="NCBI Taxonomy" id="284813"/>
    <lineage>
        <taxon>Eukaryota</taxon>
        <taxon>Fungi</taxon>
        <taxon>Fungi incertae sedis</taxon>
        <taxon>Microsporidia</taxon>
        <taxon>Unikaryonidae</taxon>
        <taxon>Encephalitozoon</taxon>
    </lineage>
</organism>
<reference key="1">
    <citation type="journal article" date="2001" name="Nature">
        <title>Genome sequence and gene compaction of the eukaryote parasite Encephalitozoon cuniculi.</title>
        <authorList>
            <person name="Katinka M.D."/>
            <person name="Duprat S."/>
            <person name="Cornillot E."/>
            <person name="Metenier G."/>
            <person name="Thomarat F."/>
            <person name="Prensier G."/>
            <person name="Barbe V."/>
            <person name="Peyretaillade E."/>
            <person name="Brottier P."/>
            <person name="Wincker P."/>
            <person name="Delbac F."/>
            <person name="El Alaoui H."/>
            <person name="Peyret P."/>
            <person name="Saurin W."/>
            <person name="Gouy M."/>
            <person name="Weissenbach J."/>
            <person name="Vivares C.P."/>
        </authorList>
    </citation>
    <scope>NUCLEOTIDE SEQUENCE [LARGE SCALE GENOMIC DNA]</scope>
    <source>
        <strain>GB-M1</strain>
    </source>
</reference>
<reference key="2">
    <citation type="journal article" date="2006" name="Proteomics">
        <title>Proteomic analysis of the eukaryotic parasite Encephalitozoon cuniculi (microsporidia): a reference map for proteins expressed in late sporogonial stages.</title>
        <authorList>
            <person name="Brosson D."/>
            <person name="Kuhn L."/>
            <person name="Delbac F."/>
            <person name="Garin J."/>
            <person name="Vivares C.P."/>
            <person name="Texier C."/>
        </authorList>
    </citation>
    <scope>IDENTIFICATION BY MASS SPECTROMETRY [LARGE SCALE ANALYSIS]</scope>
    <scope>DEVELOPMENTAL STAGE</scope>
</reference>
<protein>
    <recommendedName>
        <fullName evidence="2">Large ribosomal subunit protein uL3</fullName>
    </recommendedName>
    <alternativeName>
        <fullName>60S ribosomal protein L3</fullName>
    </alternativeName>
</protein>
<dbReference type="EMBL" id="AL590443">
    <property type="protein sequence ID" value="CAD26265.1"/>
    <property type="molecule type" value="Genomic_DNA"/>
</dbReference>
<dbReference type="EMBL" id="AL590451">
    <property type="protein sequence ID" value="CAD27073.1"/>
    <property type="molecule type" value="Genomic_DNA"/>
</dbReference>
<dbReference type="RefSeq" id="NP_597630.1">
    <property type="nucleotide sequence ID" value="NM_001040994.1"/>
</dbReference>
<dbReference type="RefSeq" id="XP_955654.1">
    <property type="nucleotide sequence ID" value="XM_950561.1"/>
</dbReference>
<dbReference type="PDB" id="7QEP">
    <property type="method" value="EM"/>
    <property type="resolution" value="2.70 A"/>
    <property type="chains" value="L3=1-383"/>
</dbReference>
<dbReference type="PDBsum" id="7QEP"/>
<dbReference type="EMDB" id="EMD-13936"/>
<dbReference type="SMR" id="Q8SQI3"/>
<dbReference type="FunCoup" id="Q8SQI3">
    <property type="interactions" value="107"/>
</dbReference>
<dbReference type="STRING" id="284813.Q8SQI3"/>
<dbReference type="GeneID" id="858792"/>
<dbReference type="KEGG" id="ecu:ECU03_1220"/>
<dbReference type="VEuPathDB" id="MicrosporidiaDB:ECU03_1220"/>
<dbReference type="VEuPathDB" id="MicrosporidiaDB:ECU09_1000"/>
<dbReference type="HOGENOM" id="CLU_033361_2_1_1"/>
<dbReference type="InParanoid" id="Q8SQI3"/>
<dbReference type="OMA" id="QRTEYNK"/>
<dbReference type="OrthoDB" id="1611972at2759"/>
<dbReference type="Proteomes" id="UP000000819">
    <property type="component" value="Chromosome III"/>
</dbReference>
<dbReference type="Proteomes" id="UP000000819">
    <property type="component" value="Chromosome IX"/>
</dbReference>
<dbReference type="GO" id="GO:0022625">
    <property type="term" value="C:cytosolic large ribosomal subunit"/>
    <property type="evidence" value="ECO:0007669"/>
    <property type="project" value="TreeGrafter"/>
</dbReference>
<dbReference type="GO" id="GO:0003723">
    <property type="term" value="F:RNA binding"/>
    <property type="evidence" value="ECO:0007669"/>
    <property type="project" value="TreeGrafter"/>
</dbReference>
<dbReference type="GO" id="GO:0003735">
    <property type="term" value="F:structural constituent of ribosome"/>
    <property type="evidence" value="ECO:0007669"/>
    <property type="project" value="InterPro"/>
</dbReference>
<dbReference type="GO" id="GO:0006412">
    <property type="term" value="P:translation"/>
    <property type="evidence" value="ECO:0007669"/>
    <property type="project" value="InterPro"/>
</dbReference>
<dbReference type="FunFam" id="2.40.30.10:FF:000351">
    <property type="entry name" value="Ribosomal protein L3"/>
    <property type="match status" value="1"/>
</dbReference>
<dbReference type="Gene3D" id="3.30.1430.10">
    <property type="match status" value="1"/>
</dbReference>
<dbReference type="Gene3D" id="4.10.960.10">
    <property type="entry name" value="Ribosomal protein L3, domain 3"/>
    <property type="match status" value="1"/>
</dbReference>
<dbReference type="Gene3D" id="2.40.30.10">
    <property type="entry name" value="Translation factors"/>
    <property type="match status" value="1"/>
</dbReference>
<dbReference type="InterPro" id="IPR045077">
    <property type="entry name" value="L3_arc_euk"/>
</dbReference>
<dbReference type="InterPro" id="IPR044892">
    <property type="entry name" value="Ribosomal_L3_dom_3_arc_sf"/>
</dbReference>
<dbReference type="InterPro" id="IPR000597">
    <property type="entry name" value="Ribosomal_uL3"/>
</dbReference>
<dbReference type="InterPro" id="IPR019926">
    <property type="entry name" value="Ribosomal_uL3_CS"/>
</dbReference>
<dbReference type="InterPro" id="IPR009000">
    <property type="entry name" value="Transl_B-barrel_sf"/>
</dbReference>
<dbReference type="PANTHER" id="PTHR11363">
    <property type="entry name" value="60S RIBOSOMAL PROTEIN L3-RELATED"/>
    <property type="match status" value="1"/>
</dbReference>
<dbReference type="PANTHER" id="PTHR11363:SF5">
    <property type="entry name" value="LARGE RIBOSOMAL SUBUNIT PROTEIN UL3"/>
    <property type="match status" value="1"/>
</dbReference>
<dbReference type="Pfam" id="PF00297">
    <property type="entry name" value="Ribosomal_L3"/>
    <property type="match status" value="1"/>
</dbReference>
<dbReference type="SUPFAM" id="SSF50447">
    <property type="entry name" value="Translation proteins"/>
    <property type="match status" value="1"/>
</dbReference>
<dbReference type="PROSITE" id="PS00474">
    <property type="entry name" value="RIBOSOMAL_L3"/>
    <property type="match status" value="1"/>
</dbReference>
<sequence>MSCRKFNAPRHGSLQFCPRKRSKTIRPAAGAFPADDRSQPVHLTGFMAYKAGMTHVVRTKTQVAKNKQLSREIMDAVTVLEAPPMVVYGIVGYEKTVTGLRRLPIVTAAYVSDGVLRRMFGNRYASKESAGQFCKGSVCESRVEMIKERAHCVRVLVQTQPTLIKGLGLKKAHIAEIQVNGGSISEKVEWALGRLEKEIAIGEVFGVNENIDTIGVTKGKGFQGTVKRFGVRKQPRKSRKGIRKVACIGAWHPSRVMYSIARAGQMGFHRRTEKNKRVYMIGNGSSNIKTEFDLTEKPISPMGGFPHYGEVRNDFIMVKGAVVGARKRVVTLRKSLLRQRAGEELVIKFVDTSSKIGHGRFQTSAEKKAFYGARKADIAAEIH</sequence>
<keyword id="KW-0002">3D-structure</keyword>
<keyword id="KW-0963">Cytoplasm</keyword>
<keyword id="KW-1185">Reference proteome</keyword>
<keyword id="KW-0687">Ribonucleoprotein</keyword>
<keyword id="KW-0689">Ribosomal protein</keyword>
<comment type="subcellular location">
    <subcellularLocation>
        <location>Cytoplasm</location>
    </subcellularLocation>
</comment>
<comment type="developmental stage">
    <text evidence="1">Expressed in late sporogonial stages.</text>
</comment>
<comment type="similarity">
    <text evidence="2">Belongs to the universal ribosomal protein uL3 family.</text>
</comment>
<name>RL3_ENCCU</name>
<feature type="chain" id="PRO_0000077242" description="Large ribosomal subunit protein uL3">
    <location>
        <begin position="1"/>
        <end position="383"/>
    </location>
</feature>